<accession>P0C1N6</accession>
<accession>Q9BPI2</accession>
<protein>
    <recommendedName>
        <fullName evidence="6">Conotoxin tx3h</fullName>
    </recommendedName>
    <alternativeName>
        <fullName evidence="6">Conotoxin Tx3.1</fullName>
    </alternativeName>
    <alternativeName>
        <fullName evidence="11">TxMLKM-011</fullName>
    </alternativeName>
    <component>
        <recommendedName>
            <fullName evidence="9">Truncated conotoxin tx3h</fullName>
        </recommendedName>
    </component>
</protein>
<comment type="subcellular location">
    <subcellularLocation>
        <location evidence="3">Secreted</location>
    </subcellularLocation>
</comment>
<comment type="tissue specificity">
    <text evidence="8 10">Expressed by the venom duct. Is present in all duct parts with a highest content in part 2 (proximal of the venom bulb) and then decreases in concentration toward the end of the duct.</text>
</comment>
<comment type="domain">
    <text evidence="7">The cysteine framework is III (CC-C-C-CC). Classified in the M-1 branch, since 1 residue stands between the fourth and the fifth cysteine residues.</text>
</comment>
<comment type="PTM">
    <text evidence="3">Contains 3 disulfide bonds.</text>
</comment>
<comment type="PTM">
    <text evidence="4">The truncated conotoxin tx3h exists in two forms, one is amidated, whereas the other is non-amidated. The conotoxin tx3h also exists in two forms, one is amidated and the other is brominated but not amidated.</text>
</comment>
<comment type="mass spectrometry">
    <molecule>Conotoxin tx3h</molecule>
</comment>
<comment type="similarity">
    <text evidence="7">Belongs to the conotoxin M superfamily.</text>
</comment>
<dbReference type="EMBL" id="AF214942">
    <property type="protein sequence ID" value="AAG60370.1"/>
    <property type="molecule type" value="mRNA"/>
</dbReference>
<dbReference type="SMR" id="P0C1N6"/>
<dbReference type="ConoServer" id="1472">
    <property type="toxin name" value="Tx3h precursor"/>
</dbReference>
<dbReference type="ConoServer" id="629">
    <property type="toxin name" value="Tx3h precursor"/>
</dbReference>
<dbReference type="GO" id="GO:0005576">
    <property type="term" value="C:extracellular region"/>
    <property type="evidence" value="ECO:0007669"/>
    <property type="project" value="UniProtKB-SubCell"/>
</dbReference>
<dbReference type="GO" id="GO:0008200">
    <property type="term" value="F:ion channel inhibitor activity"/>
    <property type="evidence" value="ECO:0007669"/>
    <property type="project" value="InterPro"/>
</dbReference>
<dbReference type="GO" id="GO:0090729">
    <property type="term" value="F:toxin activity"/>
    <property type="evidence" value="ECO:0007669"/>
    <property type="project" value="UniProtKB-KW"/>
</dbReference>
<dbReference type="InterPro" id="IPR004214">
    <property type="entry name" value="Conotoxin"/>
</dbReference>
<dbReference type="Pfam" id="PF02950">
    <property type="entry name" value="Conotoxin"/>
    <property type="match status" value="1"/>
</dbReference>
<proteinExistence type="evidence at protein level"/>
<feature type="signal peptide" evidence="2">
    <location>
        <begin position="1"/>
        <end position="24"/>
    </location>
</feature>
<feature type="propeptide" id="PRO_0000246049" evidence="7">
    <location>
        <begin position="25"/>
        <end position="52"/>
    </location>
</feature>
<feature type="peptide" id="PRO_0000246050" description="Conotoxin tx3h" evidence="3">
    <location>
        <begin position="53"/>
        <end position="70"/>
    </location>
</feature>
<feature type="peptide" id="PRO_0000445117" description="Truncated conotoxin tx3h" evidence="4">
    <location>
        <begin position="54"/>
        <end position="70"/>
    </location>
</feature>
<feature type="modified residue" description="6'-bromotryptophan; partial" evidence="4">
    <location>
        <position position="60"/>
    </location>
</feature>
<feature type="modified residue" description="Tyrosine amide; partial" evidence="3 4 5">
    <location>
        <position position="70"/>
    </location>
</feature>
<feature type="disulfide bond" evidence="1">
    <location>
        <begin position="55"/>
        <end position="68"/>
    </location>
</feature>
<feature type="disulfide bond" evidence="1">
    <location>
        <begin position="56"/>
        <end position="66"/>
    </location>
</feature>
<feature type="disulfide bond" evidence="1">
    <location>
        <begin position="61"/>
        <end position="69"/>
    </location>
</feature>
<feature type="sequence conflict" description="In Ref. 1; AAG60370." evidence="7" ref="1">
    <original>M</original>
    <variation>MM</variation>
    <location>
        <position position="1"/>
    </location>
</feature>
<feature type="sequence conflict" description="In Ref. 1; AAG60370." evidence="7" ref="1">
    <original>E</original>
    <variation>G</variation>
    <location>
        <position position="45"/>
    </location>
</feature>
<organism>
    <name type="scientific">Conus textile</name>
    <name type="common">Cloth-of-gold cone</name>
    <dbReference type="NCBI Taxonomy" id="6494"/>
    <lineage>
        <taxon>Eukaryota</taxon>
        <taxon>Metazoa</taxon>
        <taxon>Spiralia</taxon>
        <taxon>Lophotrochozoa</taxon>
        <taxon>Mollusca</taxon>
        <taxon>Gastropoda</taxon>
        <taxon>Caenogastropoda</taxon>
        <taxon>Neogastropoda</taxon>
        <taxon>Conoidea</taxon>
        <taxon>Conidae</taxon>
        <taxon>Conus</taxon>
        <taxon>Cylinder</taxon>
    </lineage>
</organism>
<name>CM3H_CONTE</name>
<reference key="1">
    <citation type="journal article" date="2001" name="Mol. Biol. Evol.">
        <title>Mechanisms for evolving hypervariability: the case of conopeptides.</title>
        <authorList>
            <person name="Conticello S.G."/>
            <person name="Gilad Y."/>
            <person name="Avidan N."/>
            <person name="Ben-Asher E."/>
            <person name="Levy Z."/>
            <person name="Fainzilber M."/>
        </authorList>
    </citation>
    <scope>NUCLEOTIDE SEQUENCE [MRNA]</scope>
</reference>
<reference key="2">
    <citation type="journal article" date="2005" name="Biochemistry">
        <title>Definition of the M-conotoxin superfamily: characterization of novel peptides from molluscivorous Conus venoms.</title>
        <authorList>
            <person name="Corpuz G.P."/>
            <person name="Jacobsen R.B."/>
            <person name="Jimenez E.C."/>
            <person name="Watkins M."/>
            <person name="Walker C."/>
            <person name="Colledge C."/>
            <person name="Garrett J.E."/>
            <person name="McDougal O."/>
            <person name="Li W."/>
            <person name="Gray W.R."/>
            <person name="Hillyard D.R."/>
            <person name="Rivier J."/>
            <person name="McIntosh J.M."/>
            <person name="Cruz L.J."/>
            <person name="Olivera B.M."/>
        </authorList>
    </citation>
    <scope>NUCLEOTIDE SEQUENCE [MRNA]</scope>
    <source>
        <tissue>Venom duct</tissue>
    </source>
</reference>
<reference key="3">
    <citation type="journal article" date="2009" name="Proc. Natl. Acad. Sci. U.S.A.">
        <title>Rapid sensitive analysis of cysteine rich peptide venom components.</title>
        <authorList>
            <person name="Ueberheide B.M."/>
            <person name="Fenyo D."/>
            <person name="Alewood P.F."/>
            <person name="Chait B.T."/>
        </authorList>
    </citation>
    <scope>PROTEIN SEQUENCE OF 53-70</scope>
    <scope>SUBCELLULAR LOCATION</scope>
    <scope>MASS SPECTROMETRY</scope>
    <scope>AMIDATION AT TYR-70</scope>
    <source>
        <tissue>Venom</tissue>
    </source>
</reference>
<reference key="4">
    <citation type="journal article" date="2012" name="J. Proteome Res.">
        <title>Constrained de novo sequencing of conotoxins.</title>
        <authorList>
            <person name="Bhatia S."/>
            <person name="Kil Y.J."/>
            <person name="Ueberheide B."/>
            <person name="Chait B.T."/>
            <person name="Tayo L."/>
            <person name="Cruz L."/>
            <person name="Lu B."/>
            <person name="Yates J.R. III"/>
            <person name="Bern M."/>
        </authorList>
    </citation>
    <scope>IDENTIFICATION BY MASS SPECTROMETRY</scope>
    <scope>SUBCELLULAR LOCATION</scope>
    <scope>BROMINATION AT TRP-60</scope>
    <scope>AMIDATION AT TYR-70</scope>
    <source>
        <tissue>Venom</tissue>
    </source>
</reference>
<reference key="5">
    <citation type="journal article" date="2012" name="Toxicon">
        <title>Secretion and maturation of conotoxins in the venom ducts of Conus textile.</title>
        <authorList>
            <person name="Dobson R."/>
            <person name="Collodoro M."/>
            <person name="Gilles N."/>
            <person name="Turtoi A."/>
            <person name="De Pauw E."/>
            <person name="Quinton L."/>
        </authorList>
    </citation>
    <scope>IDENTIFICATION BY MASS SPECTROMETRY</scope>
    <scope>TISSUE SPECIFICITY</scope>
    <scope>POSITION IN VENOM DUCT</scope>
    <scope>AMIDATION AT TYR-70</scope>
    <source>
        <tissue>Venom</tissue>
    </source>
</reference>
<sequence>MLKMGVVLFIFLVLFPLATLQLDADQPVERYAENKQLLNPDERREILLPALRKFCCDSNWCHISDCECCYG</sequence>
<evidence type="ECO:0000250" key="1">
    <source>
        <dbReference type="UniProtKB" id="Q5EHP3"/>
    </source>
</evidence>
<evidence type="ECO:0000255" key="2"/>
<evidence type="ECO:0000269" key="3">
    <source>
    </source>
</evidence>
<evidence type="ECO:0000269" key="4">
    <source>
    </source>
</evidence>
<evidence type="ECO:0000269" key="5">
    <source>
    </source>
</evidence>
<evidence type="ECO:0000303" key="6">
    <source>
    </source>
</evidence>
<evidence type="ECO:0000305" key="7"/>
<evidence type="ECO:0000305" key="8">
    <source>
    </source>
</evidence>
<evidence type="ECO:0000305" key="9">
    <source>
    </source>
</evidence>
<evidence type="ECO:0000305" key="10">
    <source>
    </source>
</evidence>
<evidence type="ECO:0000312" key="11">
    <source>
        <dbReference type="EMBL" id="AAG60370.1"/>
    </source>
</evidence>
<keyword id="KW-0027">Amidation</keyword>
<keyword id="KW-0102">Bromination</keyword>
<keyword id="KW-0165">Cleavage on pair of basic residues</keyword>
<keyword id="KW-0903">Direct protein sequencing</keyword>
<keyword id="KW-1015">Disulfide bond</keyword>
<keyword id="KW-0964">Secreted</keyword>
<keyword id="KW-0732">Signal</keyword>
<keyword id="KW-0800">Toxin</keyword>